<gene>
    <name evidence="9" type="primary">Rad9</name>
    <name evidence="9" type="ORF">CG3945</name>
</gene>
<organism evidence="10">
    <name type="scientific">Drosophila melanogaster</name>
    <name type="common">Fruit fly</name>
    <dbReference type="NCBI Taxonomy" id="7227"/>
    <lineage>
        <taxon>Eukaryota</taxon>
        <taxon>Metazoa</taxon>
        <taxon>Ecdysozoa</taxon>
        <taxon>Arthropoda</taxon>
        <taxon>Hexapoda</taxon>
        <taxon>Insecta</taxon>
        <taxon>Pterygota</taxon>
        <taxon>Neoptera</taxon>
        <taxon>Endopterygota</taxon>
        <taxon>Diptera</taxon>
        <taxon>Brachycera</taxon>
        <taxon>Muscomorpha</taxon>
        <taxon>Ephydroidea</taxon>
        <taxon>Drosophilidae</taxon>
        <taxon>Drosophila</taxon>
        <taxon>Sophophora</taxon>
    </lineage>
</organism>
<name>RAD9_DROME</name>
<comment type="function">
    <text evidence="4">Component of the Rad9-Rad1-Hus1 (9-1-1) checkpoint clamp complex.</text>
</comment>
<comment type="function">
    <molecule>Isoform A</molecule>
    <text evidence="4">Targets the 9-1-1 complex to the nuclear periphery (PubMed:22666434). Targeting to the nuclear periphery is disrupted in the presence of persistent double stranded break DNA damage, possibly as a function of the meiotic checkpoint (PubMed:22666434).</text>
</comment>
<comment type="subunit">
    <text evidence="2 3 4">Component of the 9-1-1 checkpoint clamp complex consisting of Rad9 isoform A, Rad1 and Hus1-like; the interaction with Hus1-like is direct (PubMed:17327271, PubMed:22666434). Does not interact directly with Rad1; this interaction is probably mediated by Hus1-like (PubMed:17327271). This complex probably also forms with Rad9 isoform B, however 9-1-1 complex containing Rad9 isoform A localizes to the nuclear periphery (PubMed:22666434). Interacts with Brca2 (PubMed:18266476).</text>
</comment>
<comment type="subcellular location">
    <molecule>Isoform A</molecule>
    <subcellularLocation>
        <location evidence="4">Nucleus envelope</location>
    </subcellularLocation>
    <text evidence="4">Colocalizes with lamin at the nuclear periphery (PubMed:22666434). Targets the other components of the 9-1-1 complex, Rad1 and Hus1-like to the nuclear periphery (PubMed:22666434). Targeting to the nuclear periphery is disrupted in the presence of persistent double stranded break DNA damage (PubMed:22666434).</text>
</comment>
<comment type="subcellular location">
    <molecule>Isoform B</molecule>
    <subcellularLocation>
        <location evidence="4">Nucleus</location>
    </subcellularLocation>
</comment>
<comment type="alternative products">
    <event type="alternative splicing"/>
    <isoform>
        <id>O96533-1</id>
        <name evidence="9">A</name>
        <sequence type="displayed"/>
    </isoform>
    <isoform>
        <id>O96533-2</id>
        <name evidence="9">B</name>
        <sequence type="described" ref="VSP_062581"/>
    </isoform>
    <text evidence="4">A number of isoforms are produced.</text>
</comment>
<comment type="tissue specificity">
    <text evidence="2">Expressed in ovary.</text>
</comment>
<comment type="developmental stage">
    <molecule>Isoform A</molecule>
    <text evidence="4">This isoform is the major transcript during oogenesis.</text>
</comment>
<comment type="similarity">
    <text evidence="1">Belongs to the rad9 family.</text>
</comment>
<protein>
    <recommendedName>
        <fullName evidence="5">Cell cycle checkpoint control protein Rad9</fullName>
    </recommendedName>
</protein>
<accession>O96533</accession>
<accession>A8JNV5</accession>
<proteinExistence type="evidence at protein level"/>
<keyword id="KW-0025">Alternative splicing</keyword>
<keyword id="KW-0539">Nucleus</keyword>
<keyword id="KW-1185">Reference proteome</keyword>
<sequence>MKYTLEGSNARVIAKAVQSLSKVGKEMFIEIDQQSLQMRAINATQSAVGSISFKRSMFEVYDMPPHSDFYCKISMKGCLAVFRNMNEVEYCELNLLDNQTNLQVNLRCKLETTKEATISIIDDQNINTNINTDQMPNIIRGDHKLLTDISNNFNSSEEELTLEANSGSVVAKNYIEGARVNDKFMRTQLKLKPSEFEQYQVTKETVITFCIKEFRAFLLFAECLNASLTLEFDEAGMPFLLKIKKHGEIECLLIMSTLSPDDISFSEDYCQKDLTVQDEDVRAAAAKRKSSVSKPNVTNKRKGSSSEPAAVQPKRRVEETQLESSLDNPLFQFRDSEAPSVQHPRILAEVDTVVLIEDEAEQEALMLAAADAALEASMAPAPEPPNSTEVCFINTDDSQQPKPAKSSSDEDETIPQSPERPNKVLGVLLGLLQGCVSRLKTMLRLDEHLISGYELL</sequence>
<feature type="chain" id="PRO_0000462468" description="Cell cycle checkpoint control protein Rad9">
    <location>
        <begin position="1"/>
        <end position="456"/>
    </location>
</feature>
<feature type="short sequence motif" description="Nuclear localization signal" evidence="4">
    <location>
        <begin position="300"/>
        <end position="302"/>
    </location>
</feature>
<feature type="splice variant" id="VSP_062581" description="In isoform B.">
    <original>LGVLLGLLQGCVSRLKTMLRLDEHLISGYELL</original>
    <variation>RTIFSRCFQRTYVPREPSPNTQVYAPNSDTED</variation>
    <location>
        <begin position="425"/>
        <end position="456"/>
    </location>
</feature>
<feature type="mutagenesis site" description="Does not alter nuclear localization." evidence="4">
    <original>KRK</original>
    <variation>AAA</variation>
    <location>
        <begin position="287"/>
        <end position="289"/>
    </location>
</feature>
<feature type="mutagenesis site" description="Abolishes nuclear localization." evidence="4">
    <original>KRK</original>
    <variation>AAA</variation>
    <location>
        <begin position="300"/>
        <end position="302"/>
    </location>
</feature>
<feature type="mutagenesis site" description="Does not alter nuclear localization." evidence="4">
    <original>KRR</original>
    <variation>AAA</variation>
    <location>
        <begin position="314"/>
        <end position="316"/>
    </location>
</feature>
<evidence type="ECO:0000255" key="1">
    <source>
        <dbReference type="PIRNR" id="PIRNR009303"/>
    </source>
</evidence>
<evidence type="ECO:0000269" key="2">
    <source>
    </source>
</evidence>
<evidence type="ECO:0000269" key="3">
    <source>
    </source>
</evidence>
<evidence type="ECO:0000269" key="4">
    <source>
    </source>
</evidence>
<evidence type="ECO:0000305" key="5"/>
<evidence type="ECO:0000312" key="6">
    <source>
        <dbReference type="EMBL" id="AAC95528.1"/>
    </source>
</evidence>
<evidence type="ECO:0000312" key="7">
    <source>
        <dbReference type="EMBL" id="AAD31691.1"/>
    </source>
</evidence>
<evidence type="ECO:0000312" key="8">
    <source>
        <dbReference type="EMBL" id="AAL28664.1"/>
    </source>
</evidence>
<evidence type="ECO:0000312" key="9">
    <source>
        <dbReference type="FlyBase" id="FBgn0025807"/>
    </source>
</evidence>
<evidence type="ECO:0000312" key="10">
    <source>
        <dbReference type="Proteomes" id="UP000000803"/>
    </source>
</evidence>
<dbReference type="EMBL" id="AF076846">
    <property type="protein sequence ID" value="AAC95528.1"/>
    <property type="molecule type" value="mRNA"/>
</dbReference>
<dbReference type="EMBL" id="AF124502">
    <property type="protein sequence ID" value="AAD31691.1"/>
    <property type="molecule type" value="mRNA"/>
</dbReference>
<dbReference type="EMBL" id="AE014296">
    <property type="protein sequence ID" value="AAF49221.1"/>
    <property type="molecule type" value="Genomic_DNA"/>
</dbReference>
<dbReference type="EMBL" id="AE014296">
    <property type="protein sequence ID" value="ABW08566.2"/>
    <property type="molecule type" value="Genomic_DNA"/>
</dbReference>
<dbReference type="EMBL" id="AY061116">
    <property type="protein sequence ID" value="AAL28664.1"/>
    <property type="molecule type" value="mRNA"/>
</dbReference>
<dbReference type="RefSeq" id="NP_649066.1">
    <property type="nucleotide sequence ID" value="NM_140809.3"/>
</dbReference>
<dbReference type="SMR" id="O96533"/>
<dbReference type="FunCoup" id="O96533">
    <property type="interactions" value="1224"/>
</dbReference>
<dbReference type="IntAct" id="O96533">
    <property type="interactions" value="2"/>
</dbReference>
<dbReference type="STRING" id="7227.FBpp0074847"/>
<dbReference type="PaxDb" id="7227-FBpp0074847"/>
<dbReference type="DNASU" id="40054"/>
<dbReference type="EnsemblMetazoa" id="FBtr0075080">
    <property type="protein sequence ID" value="FBpp0074847"/>
    <property type="gene ID" value="FBgn0025807"/>
</dbReference>
<dbReference type="GeneID" id="40054"/>
<dbReference type="KEGG" id="dme:Dmel_CG3945"/>
<dbReference type="UCSC" id="CG3945-RA">
    <property type="organism name" value="d. melanogaster"/>
</dbReference>
<dbReference type="AGR" id="FB:FBgn0025807"/>
<dbReference type="CTD" id="40054"/>
<dbReference type="FlyBase" id="FBgn0025807">
    <property type="gene designation" value="Rad9"/>
</dbReference>
<dbReference type="VEuPathDB" id="VectorBase:FBgn0025807"/>
<dbReference type="eggNOG" id="KOG2810">
    <property type="taxonomic scope" value="Eukaryota"/>
</dbReference>
<dbReference type="GeneTree" id="ENSGT00390000005767"/>
<dbReference type="HOGENOM" id="CLU_049242_1_0_1"/>
<dbReference type="InParanoid" id="A8JNV5"/>
<dbReference type="OMA" id="FEVFDMP"/>
<dbReference type="OrthoDB" id="60092at2759"/>
<dbReference type="Reactome" id="R-DME-176187">
    <property type="pathway name" value="Activation of ATR in response to replication stress"/>
</dbReference>
<dbReference type="Reactome" id="R-DME-5693607">
    <property type="pathway name" value="Processing of DNA double-strand break ends"/>
</dbReference>
<dbReference type="Reactome" id="R-DME-6804756">
    <property type="pathway name" value="Regulation of TP53 Activity through Phosphorylation"/>
</dbReference>
<dbReference type="Reactome" id="R-DME-69473">
    <property type="pathway name" value="G2/M DNA damage checkpoint"/>
</dbReference>
<dbReference type="BioGRID-ORCS" id="40054">
    <property type="hits" value="0 hits in 3 CRISPR screens"/>
</dbReference>
<dbReference type="Proteomes" id="UP000000803">
    <property type="component" value="Chromosome 3L"/>
</dbReference>
<dbReference type="Bgee" id="FBgn0025807">
    <property type="expression patterns" value="Expressed in adult middle midgut class I enteroendocrine cell in adult midgut (Drosophila) and 8 other cell types or tissues"/>
</dbReference>
<dbReference type="ExpressionAtlas" id="O96533">
    <property type="expression patterns" value="baseline and differential"/>
</dbReference>
<dbReference type="GO" id="GO:0030896">
    <property type="term" value="C:checkpoint clamp complex"/>
    <property type="evidence" value="ECO:0000314"/>
    <property type="project" value="FlyBase"/>
</dbReference>
<dbReference type="GO" id="GO:0031965">
    <property type="term" value="C:nuclear membrane"/>
    <property type="evidence" value="ECO:0000314"/>
    <property type="project" value="FlyBase"/>
</dbReference>
<dbReference type="GO" id="GO:0005634">
    <property type="term" value="C:nucleus"/>
    <property type="evidence" value="ECO:0000314"/>
    <property type="project" value="FlyBase"/>
</dbReference>
<dbReference type="GO" id="GO:0071479">
    <property type="term" value="P:cellular response to ionizing radiation"/>
    <property type="evidence" value="ECO:0000318"/>
    <property type="project" value="GO_Central"/>
</dbReference>
<dbReference type="GO" id="GO:0006281">
    <property type="term" value="P:DNA repair"/>
    <property type="evidence" value="ECO:0000318"/>
    <property type="project" value="GO_Central"/>
</dbReference>
<dbReference type="GO" id="GO:0000076">
    <property type="term" value="P:DNA replication checkpoint signaling"/>
    <property type="evidence" value="ECO:0000318"/>
    <property type="project" value="GO_Central"/>
</dbReference>
<dbReference type="GO" id="GO:0031573">
    <property type="term" value="P:mitotic intra-S DNA damage checkpoint signaling"/>
    <property type="evidence" value="ECO:0000318"/>
    <property type="project" value="GO_Central"/>
</dbReference>
<dbReference type="CDD" id="cd00577">
    <property type="entry name" value="PCNA"/>
    <property type="match status" value="1"/>
</dbReference>
<dbReference type="FunFam" id="3.70.10.10:FF:000035">
    <property type="entry name" value="Cell cycle checkpoint control protein"/>
    <property type="match status" value="1"/>
</dbReference>
<dbReference type="Gene3D" id="3.70.10.10">
    <property type="match status" value="1"/>
</dbReference>
<dbReference type="InterPro" id="IPR046938">
    <property type="entry name" value="DNA_clamp_sf"/>
</dbReference>
<dbReference type="InterPro" id="IPR026584">
    <property type="entry name" value="Rad9"/>
</dbReference>
<dbReference type="InterPro" id="IPR007268">
    <property type="entry name" value="Rad9/Ddc1"/>
</dbReference>
<dbReference type="PANTHER" id="PTHR15237:SF0">
    <property type="entry name" value="CELL CYCLE CHECKPOINT CONTROL PROTEIN"/>
    <property type="match status" value="1"/>
</dbReference>
<dbReference type="PANTHER" id="PTHR15237">
    <property type="entry name" value="DNA REPAIR PROTEIN RAD9"/>
    <property type="match status" value="1"/>
</dbReference>
<dbReference type="Pfam" id="PF04139">
    <property type="entry name" value="Rad9"/>
    <property type="match status" value="1"/>
</dbReference>
<dbReference type="PIRSF" id="PIRSF009303">
    <property type="entry name" value="Cell_cycle_RAD9"/>
    <property type="match status" value="1"/>
</dbReference>
<dbReference type="SUPFAM" id="SSF55979">
    <property type="entry name" value="DNA clamp"/>
    <property type="match status" value="1"/>
</dbReference>
<reference evidence="6" key="1">
    <citation type="journal article" date="1998" name="Genomics">
        <title>cDNA cloning and gene mapping of human homologs for Schizosaccharomyces pombe rad17, rad1, and hus1 and cloning of homologs from mouse, Caenorhabditis elegans, and Drosophila melanogaster.</title>
        <authorList>
            <person name="Dean F.B."/>
            <person name="Lian L."/>
            <person name="O'Donnell M."/>
        </authorList>
    </citation>
    <scope>NUCLEOTIDE SEQUENCE [MRNA]</scope>
</reference>
<reference evidence="7" key="2">
    <citation type="submission" date="1999-01" db="EMBL/GenBank/DDBJ databases">
        <title>Drosophila DNA damage checkpoint homologs.</title>
        <authorList>
            <person name="Brodsky M.H."/>
            <person name="Tsang G."/>
            <person name="Thelen M.P."/>
            <person name="Rubin G.M."/>
        </authorList>
    </citation>
    <scope>NUCLEOTIDE SEQUENCE [MRNA]</scope>
</reference>
<reference evidence="10" key="3">
    <citation type="journal article" date="2000" name="Science">
        <title>The genome sequence of Drosophila melanogaster.</title>
        <authorList>
            <person name="Adams M.D."/>
            <person name="Celniker S.E."/>
            <person name="Holt R.A."/>
            <person name="Evans C.A."/>
            <person name="Gocayne J.D."/>
            <person name="Amanatides P.G."/>
            <person name="Scherer S.E."/>
            <person name="Li P.W."/>
            <person name="Hoskins R.A."/>
            <person name="Galle R.F."/>
            <person name="George R.A."/>
            <person name="Lewis S.E."/>
            <person name="Richards S."/>
            <person name="Ashburner M."/>
            <person name="Henderson S.N."/>
            <person name="Sutton G.G."/>
            <person name="Wortman J.R."/>
            <person name="Yandell M.D."/>
            <person name="Zhang Q."/>
            <person name="Chen L.X."/>
            <person name="Brandon R.C."/>
            <person name="Rogers Y.-H.C."/>
            <person name="Blazej R.G."/>
            <person name="Champe M."/>
            <person name="Pfeiffer B.D."/>
            <person name="Wan K.H."/>
            <person name="Doyle C."/>
            <person name="Baxter E.G."/>
            <person name="Helt G."/>
            <person name="Nelson C.R."/>
            <person name="Miklos G.L.G."/>
            <person name="Abril J.F."/>
            <person name="Agbayani A."/>
            <person name="An H.-J."/>
            <person name="Andrews-Pfannkoch C."/>
            <person name="Baldwin D."/>
            <person name="Ballew R.M."/>
            <person name="Basu A."/>
            <person name="Baxendale J."/>
            <person name="Bayraktaroglu L."/>
            <person name="Beasley E.M."/>
            <person name="Beeson K.Y."/>
            <person name="Benos P.V."/>
            <person name="Berman B.P."/>
            <person name="Bhandari D."/>
            <person name="Bolshakov S."/>
            <person name="Borkova D."/>
            <person name="Botchan M.R."/>
            <person name="Bouck J."/>
            <person name="Brokstein P."/>
            <person name="Brottier P."/>
            <person name="Burtis K.C."/>
            <person name="Busam D.A."/>
            <person name="Butler H."/>
            <person name="Cadieu E."/>
            <person name="Center A."/>
            <person name="Chandra I."/>
            <person name="Cherry J.M."/>
            <person name="Cawley S."/>
            <person name="Dahlke C."/>
            <person name="Davenport L.B."/>
            <person name="Davies P."/>
            <person name="de Pablos B."/>
            <person name="Delcher A."/>
            <person name="Deng Z."/>
            <person name="Mays A.D."/>
            <person name="Dew I."/>
            <person name="Dietz S.M."/>
            <person name="Dodson K."/>
            <person name="Doup L.E."/>
            <person name="Downes M."/>
            <person name="Dugan-Rocha S."/>
            <person name="Dunkov B.C."/>
            <person name="Dunn P."/>
            <person name="Durbin K.J."/>
            <person name="Evangelista C.C."/>
            <person name="Ferraz C."/>
            <person name="Ferriera S."/>
            <person name="Fleischmann W."/>
            <person name="Fosler C."/>
            <person name="Gabrielian A.E."/>
            <person name="Garg N.S."/>
            <person name="Gelbart W.M."/>
            <person name="Glasser K."/>
            <person name="Glodek A."/>
            <person name="Gong F."/>
            <person name="Gorrell J.H."/>
            <person name="Gu Z."/>
            <person name="Guan P."/>
            <person name="Harris M."/>
            <person name="Harris N.L."/>
            <person name="Harvey D.A."/>
            <person name="Heiman T.J."/>
            <person name="Hernandez J.R."/>
            <person name="Houck J."/>
            <person name="Hostin D."/>
            <person name="Houston K.A."/>
            <person name="Howland T.J."/>
            <person name="Wei M.-H."/>
            <person name="Ibegwam C."/>
            <person name="Jalali M."/>
            <person name="Kalush F."/>
            <person name="Karpen G.H."/>
            <person name="Ke Z."/>
            <person name="Kennison J.A."/>
            <person name="Ketchum K.A."/>
            <person name="Kimmel B.E."/>
            <person name="Kodira C.D."/>
            <person name="Kraft C.L."/>
            <person name="Kravitz S."/>
            <person name="Kulp D."/>
            <person name="Lai Z."/>
            <person name="Lasko P."/>
            <person name="Lei Y."/>
            <person name="Levitsky A.A."/>
            <person name="Li J.H."/>
            <person name="Li Z."/>
            <person name="Liang Y."/>
            <person name="Lin X."/>
            <person name="Liu X."/>
            <person name="Mattei B."/>
            <person name="McIntosh T.C."/>
            <person name="McLeod M.P."/>
            <person name="McPherson D."/>
            <person name="Merkulov G."/>
            <person name="Milshina N.V."/>
            <person name="Mobarry C."/>
            <person name="Morris J."/>
            <person name="Moshrefi A."/>
            <person name="Mount S.M."/>
            <person name="Moy M."/>
            <person name="Murphy B."/>
            <person name="Murphy L."/>
            <person name="Muzny D.M."/>
            <person name="Nelson D.L."/>
            <person name="Nelson D.R."/>
            <person name="Nelson K.A."/>
            <person name="Nixon K."/>
            <person name="Nusskern D.R."/>
            <person name="Pacleb J.M."/>
            <person name="Palazzolo M."/>
            <person name="Pittman G.S."/>
            <person name="Pan S."/>
            <person name="Pollard J."/>
            <person name="Puri V."/>
            <person name="Reese M.G."/>
            <person name="Reinert K."/>
            <person name="Remington K."/>
            <person name="Saunders R.D.C."/>
            <person name="Scheeler F."/>
            <person name="Shen H."/>
            <person name="Shue B.C."/>
            <person name="Siden-Kiamos I."/>
            <person name="Simpson M."/>
            <person name="Skupski M.P."/>
            <person name="Smith T.J."/>
            <person name="Spier E."/>
            <person name="Spradling A.C."/>
            <person name="Stapleton M."/>
            <person name="Strong R."/>
            <person name="Sun E."/>
            <person name="Svirskas R."/>
            <person name="Tector C."/>
            <person name="Turner R."/>
            <person name="Venter E."/>
            <person name="Wang A.H."/>
            <person name="Wang X."/>
            <person name="Wang Z.-Y."/>
            <person name="Wassarman D.A."/>
            <person name="Weinstock G.M."/>
            <person name="Weissenbach J."/>
            <person name="Williams S.M."/>
            <person name="Woodage T."/>
            <person name="Worley K.C."/>
            <person name="Wu D."/>
            <person name="Yang S."/>
            <person name="Yao Q.A."/>
            <person name="Ye J."/>
            <person name="Yeh R.-F."/>
            <person name="Zaveri J.S."/>
            <person name="Zhan M."/>
            <person name="Zhang G."/>
            <person name="Zhao Q."/>
            <person name="Zheng L."/>
            <person name="Zheng X.H."/>
            <person name="Zhong F.N."/>
            <person name="Zhong W."/>
            <person name="Zhou X."/>
            <person name="Zhu S.C."/>
            <person name="Zhu X."/>
            <person name="Smith H.O."/>
            <person name="Gibbs R.A."/>
            <person name="Myers E.W."/>
            <person name="Rubin G.M."/>
            <person name="Venter J.C."/>
        </authorList>
    </citation>
    <scope>NUCLEOTIDE SEQUENCE [LARGE SCALE GENOMIC DNA]</scope>
    <source>
        <strain evidence="10">Berkeley</strain>
    </source>
</reference>
<reference evidence="10" key="4">
    <citation type="journal article" date="2002" name="Genome Biol.">
        <title>Annotation of the Drosophila melanogaster euchromatic genome: a systematic review.</title>
        <authorList>
            <person name="Misra S."/>
            <person name="Crosby M.A."/>
            <person name="Mungall C.J."/>
            <person name="Matthews B.B."/>
            <person name="Campbell K.S."/>
            <person name="Hradecky P."/>
            <person name="Huang Y."/>
            <person name="Kaminker J.S."/>
            <person name="Millburn G.H."/>
            <person name="Prochnik S.E."/>
            <person name="Smith C.D."/>
            <person name="Tupy J.L."/>
            <person name="Whitfield E.J."/>
            <person name="Bayraktaroglu L."/>
            <person name="Berman B.P."/>
            <person name="Bettencourt B.R."/>
            <person name="Celniker S.E."/>
            <person name="de Grey A.D.N.J."/>
            <person name="Drysdale R.A."/>
            <person name="Harris N.L."/>
            <person name="Richter J."/>
            <person name="Russo S."/>
            <person name="Schroeder A.J."/>
            <person name="Shu S.Q."/>
            <person name="Stapleton M."/>
            <person name="Yamada C."/>
            <person name="Ashburner M."/>
            <person name="Gelbart W.M."/>
            <person name="Rubin G.M."/>
            <person name="Lewis S.E."/>
        </authorList>
    </citation>
    <scope>GENOME REANNOTATION</scope>
    <source>
        <strain evidence="10">Berkeley</strain>
    </source>
</reference>
<reference evidence="8" key="5">
    <citation type="journal article" date="2002" name="Genome Biol.">
        <title>A Drosophila full-length cDNA resource.</title>
        <authorList>
            <person name="Stapleton M."/>
            <person name="Carlson J.W."/>
            <person name="Brokstein P."/>
            <person name="Yu C."/>
            <person name="Champe M."/>
            <person name="George R.A."/>
            <person name="Guarin H."/>
            <person name="Kronmiller B."/>
            <person name="Pacleb J.M."/>
            <person name="Park S."/>
            <person name="Wan K.H."/>
            <person name="Rubin G.M."/>
            <person name="Celniker S.E."/>
        </authorList>
    </citation>
    <scope>NUCLEOTIDE SEQUENCE [LARGE SCALE MRNA]</scope>
    <source>
        <strain evidence="8">Berkeley</strain>
        <tissue evidence="8">Embryo</tissue>
    </source>
</reference>
<reference evidence="5" key="6">
    <citation type="journal article" date="2007" name="J. Cell Sci.">
        <title>An essential role for Drosophila hus1 in somatic and meiotic DNA damage responses.</title>
        <authorList>
            <person name="Abdu U."/>
            <person name="Klovstad M."/>
            <person name="Butin-Israeli V."/>
            <person name="Bakhrat A."/>
            <person name="Schuepbach T."/>
        </authorList>
    </citation>
    <scope>INTERACTION WITH HUS1-LIKE</scope>
    <scope>TISSUE SPECIFICITY</scope>
</reference>
<reference evidence="5" key="7">
    <citation type="journal article" date="2008" name="PLoS Genet.">
        <title>Drosophila brca2 is required for mitotic and meiotic DNA repair and efficient activation of the meiotic recombination checkpoint.</title>
        <authorList>
            <person name="Klovstad M."/>
            <person name="Abdu U."/>
            <person name="Schupbach T."/>
        </authorList>
    </citation>
    <scope>INTERACTION WITH BRCA2</scope>
</reference>
<reference evidence="5" key="8">
    <citation type="journal article" date="2012" name="PLoS ONE">
        <title>Localization of the Drosophila Rad9 protein to the nuclear membrane is regulated by the C-terminal region and is affected in the meiotic checkpoint.</title>
        <authorList>
            <person name="Kadir R."/>
            <person name="Bakhrat A."/>
            <person name="Tokarsky R."/>
            <person name="Abdu U."/>
        </authorList>
    </citation>
    <scope>FUNCTION</scope>
    <scope>INTERACTION WITH RAD1 AND HUS1</scope>
    <scope>SUBCELLULAR LOCATION</scope>
    <scope>ALTERNATIVE SPLICING</scope>
    <scope>DEVELOPMENTAL STAGE</scope>
    <scope>NUCLEAR LOCALIZATION SIGNAL</scope>
    <scope>MUTAGENESIS OF 287-LYS--LYS-289; 300-LYS--LYS-302 AND 314-LYS--ARG-316</scope>
</reference>